<accession>P37205</accession>
<feature type="chain" id="PRO_0000149036" description="Gonadotropin subunit beta-1">
    <location>
        <begin position="1"/>
        <end position="102"/>
    </location>
</feature>
<feature type="glycosylation site" description="N-linked (GlcNAc...) asparagine">
    <location>
        <position position="12"/>
    </location>
</feature>
<feature type="disulfide bond" evidence="1">
    <location>
        <begin position="8"/>
        <end position="51"/>
    </location>
</feature>
<feature type="disulfide bond" evidence="1">
    <location>
        <begin position="20"/>
        <end position="65"/>
    </location>
</feature>
<feature type="disulfide bond" evidence="1">
    <location>
        <begin position="31"/>
        <end position="77"/>
    </location>
</feature>
<feature type="disulfide bond" evidence="1">
    <location>
        <begin position="35"/>
        <end position="79"/>
    </location>
</feature>
<feature type="disulfide bond" evidence="1">
    <location>
        <begin position="82"/>
        <end position="89"/>
    </location>
</feature>
<keyword id="KW-0903">Direct protein sequencing</keyword>
<keyword id="KW-1015">Disulfide bond</keyword>
<keyword id="KW-0325">Glycoprotein</keyword>
<keyword id="KW-0372">Hormone</keyword>
<keyword id="KW-0964">Secreted</keyword>
<protein>
    <recommendedName>
        <fullName>Gonadotropin subunit beta-1</fullName>
    </recommendedName>
    <alternativeName>
        <fullName>GTH-I-beta</fullName>
    </alternativeName>
    <alternativeName>
        <fullName>Gonadotropin beta-I chain</fullName>
    </alternativeName>
</protein>
<name>GTHB1_THUOB</name>
<reference key="1">
    <citation type="journal article" date="1994" name="Int. J. Pept. Protein Res.">
        <title>Purification and characterization of gonadotropin I and II from pituitary glands of tuna (Thunnus obesus).</title>
        <authorList>
            <person name="Okada T."/>
            <person name="Kawazoe I."/>
            <person name="Kimura S."/>
            <person name="Sasamoto Y."/>
            <person name="Aida K."/>
            <person name="Kawauchi H."/>
        </authorList>
    </citation>
    <scope>PROTEIN SEQUENCE</scope>
    <source>
        <tissue>Pituitary</tissue>
    </source>
</reference>
<sequence length="102" mass="11112">GQGCSYGCHPKNISISVESCGITEFILTTICEGQCYLEDPVYISHDEQKICNGDWSYEVKHIEGCPVGVTYPVARNCECTACNTGNTYCGRLPGYVPSCPSF</sequence>
<organism>
    <name type="scientific">Thunnus obesus</name>
    <name type="common">Bigeye tuna</name>
    <dbReference type="NCBI Taxonomy" id="8241"/>
    <lineage>
        <taxon>Eukaryota</taxon>
        <taxon>Metazoa</taxon>
        <taxon>Chordata</taxon>
        <taxon>Craniata</taxon>
        <taxon>Vertebrata</taxon>
        <taxon>Euteleostomi</taxon>
        <taxon>Actinopterygii</taxon>
        <taxon>Neopterygii</taxon>
        <taxon>Teleostei</taxon>
        <taxon>Neoteleostei</taxon>
        <taxon>Acanthomorphata</taxon>
        <taxon>Pelagiaria</taxon>
        <taxon>Scombriformes</taxon>
        <taxon>Scombridae</taxon>
        <taxon>Thunnus</taxon>
    </lineage>
</organism>
<dbReference type="SMR" id="P37205"/>
<dbReference type="GlyCosmos" id="P37205">
    <property type="glycosylation" value="1 site, No reported glycans"/>
</dbReference>
<dbReference type="GO" id="GO:0005576">
    <property type="term" value="C:extracellular region"/>
    <property type="evidence" value="ECO:0007669"/>
    <property type="project" value="UniProtKB-SubCell"/>
</dbReference>
<dbReference type="GO" id="GO:0005179">
    <property type="term" value="F:hormone activity"/>
    <property type="evidence" value="ECO:0007669"/>
    <property type="project" value="UniProtKB-KW"/>
</dbReference>
<dbReference type="CDD" id="cd00069">
    <property type="entry name" value="GHB_like"/>
    <property type="match status" value="1"/>
</dbReference>
<dbReference type="Gene3D" id="2.10.90.10">
    <property type="entry name" value="Cystine-knot cytokines"/>
    <property type="match status" value="1"/>
</dbReference>
<dbReference type="InterPro" id="IPR029034">
    <property type="entry name" value="Cystine-knot_cytokine"/>
</dbReference>
<dbReference type="InterPro" id="IPR006208">
    <property type="entry name" value="Glyco_hormone_CN"/>
</dbReference>
<dbReference type="InterPro" id="IPR001545">
    <property type="entry name" value="Gonadotropin_bsu"/>
</dbReference>
<dbReference type="InterPro" id="IPR018245">
    <property type="entry name" value="Gonadotropin_bsu_CS"/>
</dbReference>
<dbReference type="Pfam" id="PF00007">
    <property type="entry name" value="Cys_knot"/>
    <property type="match status" value="1"/>
</dbReference>
<dbReference type="SMART" id="SM00068">
    <property type="entry name" value="GHB"/>
    <property type="match status" value="1"/>
</dbReference>
<dbReference type="SUPFAM" id="SSF57501">
    <property type="entry name" value="Cystine-knot cytokines"/>
    <property type="match status" value="1"/>
</dbReference>
<dbReference type="PROSITE" id="PS00689">
    <property type="entry name" value="GLYCO_HORMONE_BETA_2"/>
    <property type="match status" value="1"/>
</dbReference>
<evidence type="ECO:0000250" key="1"/>
<evidence type="ECO:0000305" key="2"/>
<comment type="function">
    <text>Involved in gametogenesis and steroidogenesis.</text>
</comment>
<comment type="subunit">
    <text>Heterodimer of an alpha and a beta chain.</text>
</comment>
<comment type="subcellular location">
    <subcellularLocation>
        <location>Secreted</location>
    </subcellularLocation>
</comment>
<comment type="similarity">
    <text evidence="2">Belongs to the glycoprotein hormones subunit beta family.</text>
</comment>
<proteinExistence type="evidence at protein level"/>
<gene>
    <name type="primary">cgba</name>
</gene>